<keyword id="KW-0067">ATP-binding</keyword>
<keyword id="KW-0173">Coenzyme A biosynthesis</keyword>
<keyword id="KW-0963">Cytoplasm</keyword>
<keyword id="KW-0418">Kinase</keyword>
<keyword id="KW-0547">Nucleotide-binding</keyword>
<keyword id="KW-0808">Transferase</keyword>
<proteinExistence type="inferred from homology"/>
<sequence>MKVGIDAGGTLIKIVQEQDNQRTFKTELTKNIDQVVEWLNQQQIEKLCLTGGNAGVIAENINIPAQIFVEFDAASQGLGILLKEQGHDLADYIFANVGTGTSLHYFDGQSQRRVGGIGTGGGMIQGLGYLLSQITDYKQLTDMAQHGDRNTIDLKVRHIYKDTEPPIPGDLTAANFGHVLHHLDADFTPSNKLAAVIGVVGEVVTTMAITVAREFKTENIVYIGSSFHNNALLRKVVEDYTVLRGCKPYYVENGAFSGAIGALYLEK</sequence>
<name>COAW_STAA3</name>
<evidence type="ECO:0000255" key="1">
    <source>
        <dbReference type="HAMAP-Rule" id="MF_01273"/>
    </source>
</evidence>
<reference key="1">
    <citation type="journal article" date="2006" name="Lancet">
        <title>Complete genome sequence of USA300, an epidemic clone of community-acquired meticillin-resistant Staphylococcus aureus.</title>
        <authorList>
            <person name="Diep B.A."/>
            <person name="Gill S.R."/>
            <person name="Chang R.F."/>
            <person name="Phan T.H."/>
            <person name="Chen J.H."/>
            <person name="Davidson M.G."/>
            <person name="Lin F."/>
            <person name="Lin J."/>
            <person name="Carleton H.A."/>
            <person name="Mongodin E.F."/>
            <person name="Sensabaugh G.F."/>
            <person name="Perdreau-Remington F."/>
        </authorList>
    </citation>
    <scope>NUCLEOTIDE SEQUENCE [LARGE SCALE GENOMIC DNA]</scope>
    <source>
        <strain>USA300</strain>
    </source>
</reference>
<organism>
    <name type="scientific">Staphylococcus aureus (strain USA300)</name>
    <dbReference type="NCBI Taxonomy" id="367830"/>
    <lineage>
        <taxon>Bacteria</taxon>
        <taxon>Bacillati</taxon>
        <taxon>Bacillota</taxon>
        <taxon>Bacilli</taxon>
        <taxon>Bacillales</taxon>
        <taxon>Staphylococcaceae</taxon>
        <taxon>Staphylococcus</taxon>
    </lineage>
</organism>
<comment type="function">
    <text evidence="1">Catalyzes the phosphorylation of pantothenate (Pan), the first step in CoA biosynthesis.</text>
</comment>
<comment type="catalytic activity">
    <reaction evidence="1">
        <text>(R)-pantothenate + ATP = (R)-4'-phosphopantothenate + ADP + H(+)</text>
        <dbReference type="Rhea" id="RHEA:16373"/>
        <dbReference type="ChEBI" id="CHEBI:10986"/>
        <dbReference type="ChEBI" id="CHEBI:15378"/>
        <dbReference type="ChEBI" id="CHEBI:29032"/>
        <dbReference type="ChEBI" id="CHEBI:30616"/>
        <dbReference type="ChEBI" id="CHEBI:456216"/>
        <dbReference type="EC" id="2.7.1.33"/>
    </reaction>
</comment>
<comment type="pathway">
    <text evidence="1">Cofactor biosynthesis; coenzyme A biosynthesis; CoA from (R)-pantothenate: step 1/5.</text>
</comment>
<comment type="subunit">
    <text evidence="1">Homodimer.</text>
</comment>
<comment type="subcellular location">
    <subcellularLocation>
        <location evidence="1">Cytoplasm</location>
    </subcellularLocation>
</comment>
<comment type="similarity">
    <text evidence="1">Belongs to the type II pantothenate kinase family.</text>
</comment>
<accession>Q2FEZ8</accession>
<dbReference type="EC" id="2.7.1.33" evidence="1"/>
<dbReference type="EMBL" id="CP000255">
    <property type="protein sequence ID" value="ABD22282.1"/>
    <property type="molecule type" value="Genomic_DNA"/>
</dbReference>
<dbReference type="SMR" id="Q2FEZ8"/>
<dbReference type="DIP" id="DIP-29151N"/>
<dbReference type="KEGG" id="saa:SAUSA300_2084"/>
<dbReference type="HOGENOM" id="CLU_087521_1_0_9"/>
<dbReference type="OMA" id="VKHIYKD"/>
<dbReference type="UniPathway" id="UPA00241">
    <property type="reaction ID" value="UER00352"/>
</dbReference>
<dbReference type="Proteomes" id="UP000001939">
    <property type="component" value="Chromosome"/>
</dbReference>
<dbReference type="GO" id="GO:0005829">
    <property type="term" value="C:cytosol"/>
    <property type="evidence" value="ECO:0007669"/>
    <property type="project" value="TreeGrafter"/>
</dbReference>
<dbReference type="GO" id="GO:0005524">
    <property type="term" value="F:ATP binding"/>
    <property type="evidence" value="ECO:0007669"/>
    <property type="project" value="UniProtKB-UniRule"/>
</dbReference>
<dbReference type="GO" id="GO:0004594">
    <property type="term" value="F:pantothenate kinase activity"/>
    <property type="evidence" value="ECO:0007669"/>
    <property type="project" value="UniProtKB-UniRule"/>
</dbReference>
<dbReference type="GO" id="GO:0015937">
    <property type="term" value="P:coenzyme A biosynthetic process"/>
    <property type="evidence" value="ECO:0007669"/>
    <property type="project" value="UniProtKB-UniRule"/>
</dbReference>
<dbReference type="CDD" id="cd24016">
    <property type="entry name" value="ASKHA_NBD_PanK-II"/>
    <property type="match status" value="1"/>
</dbReference>
<dbReference type="Gene3D" id="3.30.420.40">
    <property type="match status" value="1"/>
</dbReference>
<dbReference type="HAMAP" id="MF_01273">
    <property type="entry name" value="Pantothen_kinase_2"/>
    <property type="match status" value="1"/>
</dbReference>
<dbReference type="InterPro" id="IPR043129">
    <property type="entry name" value="ATPase_NBD"/>
</dbReference>
<dbReference type="InterPro" id="IPR004567">
    <property type="entry name" value="Type_II_PanK"/>
</dbReference>
<dbReference type="InterPro" id="IPR011602">
    <property type="entry name" value="Type_II_PanK_bac"/>
</dbReference>
<dbReference type="NCBIfam" id="TIGR00555">
    <property type="entry name" value="panK_eukar"/>
    <property type="match status" value="1"/>
</dbReference>
<dbReference type="NCBIfam" id="NF009842">
    <property type="entry name" value="PRK13317.1"/>
    <property type="match status" value="1"/>
</dbReference>
<dbReference type="PANTHER" id="PTHR12280:SF20">
    <property type="entry name" value="4'-PHOSPHOPANTETHEINE PHOSPHATASE"/>
    <property type="match status" value="1"/>
</dbReference>
<dbReference type="PANTHER" id="PTHR12280">
    <property type="entry name" value="PANTOTHENATE KINASE"/>
    <property type="match status" value="1"/>
</dbReference>
<dbReference type="Pfam" id="PF03630">
    <property type="entry name" value="Fumble"/>
    <property type="match status" value="1"/>
</dbReference>
<dbReference type="PIRSF" id="PIRSF036940">
    <property type="entry name" value="PanK_bac_aCoA"/>
    <property type="match status" value="1"/>
</dbReference>
<dbReference type="SUPFAM" id="SSF53067">
    <property type="entry name" value="Actin-like ATPase domain"/>
    <property type="match status" value="1"/>
</dbReference>
<gene>
    <name evidence="1" type="primary">coaW</name>
    <name type="synonym">coaA</name>
    <name type="ordered locus">SAUSA300_2084</name>
</gene>
<feature type="chain" id="PRO_0000261351" description="Type II pantothenate kinase">
    <location>
        <begin position="1"/>
        <end position="267"/>
    </location>
</feature>
<feature type="active site" description="Proton acceptor" evidence="1">
    <location>
        <position position="70"/>
    </location>
</feature>
<feature type="binding site" evidence="1">
    <location>
        <begin position="6"/>
        <end position="13"/>
    </location>
    <ligand>
        <name>ATP</name>
        <dbReference type="ChEBI" id="CHEBI:30616"/>
    </ligand>
</feature>
<feature type="binding site" evidence="1">
    <location>
        <position position="99"/>
    </location>
    <ligand>
        <name>ATP</name>
        <dbReference type="ChEBI" id="CHEBI:30616"/>
    </ligand>
</feature>
<feature type="binding site" evidence="1">
    <location>
        <begin position="121"/>
        <end position="125"/>
    </location>
    <ligand>
        <name>ATP</name>
        <dbReference type="ChEBI" id="CHEBI:30616"/>
    </ligand>
</feature>
<feature type="binding site" evidence="1">
    <location>
        <position position="137"/>
    </location>
    <ligand>
        <name>ATP</name>
        <dbReference type="ChEBI" id="CHEBI:30616"/>
    </ligand>
</feature>
<feature type="binding site" evidence="1">
    <location>
        <position position="225"/>
    </location>
    <ligand>
        <name>ATP</name>
        <dbReference type="ChEBI" id="CHEBI:30616"/>
    </ligand>
</feature>
<protein>
    <recommendedName>
        <fullName evidence="1">Type II pantothenate kinase</fullName>
        <ecNumber evidence="1">2.7.1.33</ecNumber>
    </recommendedName>
    <alternativeName>
        <fullName evidence="1">PanK-II</fullName>
    </alternativeName>
    <alternativeName>
        <fullName evidence="1">Pantothenic acid kinase</fullName>
    </alternativeName>
</protein>